<accession>Q5R606</accession>
<dbReference type="EMBL" id="CR860694">
    <property type="protein sequence ID" value="CAH92810.1"/>
    <property type="molecule type" value="mRNA"/>
</dbReference>
<dbReference type="RefSeq" id="NP_001126639.1">
    <property type="nucleotide sequence ID" value="NM_001133167.1"/>
</dbReference>
<dbReference type="SMR" id="Q5R606"/>
<dbReference type="FunCoup" id="Q5R606">
    <property type="interactions" value="3498"/>
</dbReference>
<dbReference type="STRING" id="9601.ENSPPYP00000005987"/>
<dbReference type="GeneID" id="100173637"/>
<dbReference type="KEGG" id="pon:100173637"/>
<dbReference type="CTD" id="10808"/>
<dbReference type="eggNOG" id="KOG0103">
    <property type="taxonomic scope" value="Eukaryota"/>
</dbReference>
<dbReference type="InParanoid" id="Q5R606"/>
<dbReference type="OrthoDB" id="434160at2759"/>
<dbReference type="Proteomes" id="UP000001595">
    <property type="component" value="Unplaced"/>
</dbReference>
<dbReference type="GO" id="GO:0005829">
    <property type="term" value="C:cytosol"/>
    <property type="evidence" value="ECO:0007669"/>
    <property type="project" value="TreeGrafter"/>
</dbReference>
<dbReference type="GO" id="GO:0005634">
    <property type="term" value="C:nucleus"/>
    <property type="evidence" value="ECO:0007669"/>
    <property type="project" value="TreeGrafter"/>
</dbReference>
<dbReference type="GO" id="GO:0000774">
    <property type="term" value="F:adenyl-nucleotide exchange factor activity"/>
    <property type="evidence" value="ECO:0000250"/>
    <property type="project" value="UniProtKB"/>
</dbReference>
<dbReference type="GO" id="GO:0005524">
    <property type="term" value="F:ATP binding"/>
    <property type="evidence" value="ECO:0007669"/>
    <property type="project" value="UniProtKB-KW"/>
</dbReference>
<dbReference type="GO" id="GO:0140662">
    <property type="term" value="F:ATP-dependent protein folding chaperone"/>
    <property type="evidence" value="ECO:0007669"/>
    <property type="project" value="InterPro"/>
</dbReference>
<dbReference type="CDD" id="cd11739">
    <property type="entry name" value="ASKHA_NBD_HSP70_HSPH1"/>
    <property type="match status" value="1"/>
</dbReference>
<dbReference type="FunFam" id="1.20.1270.10:FF:000002">
    <property type="entry name" value="Heat shock 70 kDa protein 4"/>
    <property type="match status" value="1"/>
</dbReference>
<dbReference type="FunFam" id="3.30.30.30:FF:000002">
    <property type="entry name" value="Heat shock 70 kDa protein 4"/>
    <property type="match status" value="1"/>
</dbReference>
<dbReference type="FunFam" id="3.30.420.40:FF:000171">
    <property type="entry name" value="Heat shock 70 kDa protein 4"/>
    <property type="match status" value="1"/>
</dbReference>
<dbReference type="FunFam" id="3.90.640.10:FF:000004">
    <property type="entry name" value="Heat shock 70 kDa protein 4"/>
    <property type="match status" value="1"/>
</dbReference>
<dbReference type="FunFam" id="3.30.420.40:FF:000243">
    <property type="entry name" value="Heat shock protein 105 kDa"/>
    <property type="match status" value="1"/>
</dbReference>
<dbReference type="FunFam" id="1.20.1270.10:FF:000012">
    <property type="entry name" value="Heat shock protein 105 kDa isoform 1"/>
    <property type="match status" value="1"/>
</dbReference>
<dbReference type="FunFam" id="2.60.34.10:FF:000007">
    <property type="entry name" value="Heat shock protein 105 kDa isoform 1"/>
    <property type="match status" value="1"/>
</dbReference>
<dbReference type="FunFam" id="3.30.420.40:FF:000495">
    <property type="entry name" value="Heat shock protein 4b"/>
    <property type="match status" value="1"/>
</dbReference>
<dbReference type="FunFam" id="3.30.420.40:FF:000767">
    <property type="entry name" value="Heat shock protein 70 (HSP70)-4, putative"/>
    <property type="match status" value="1"/>
</dbReference>
<dbReference type="Gene3D" id="1.20.1270.10">
    <property type="match status" value="2"/>
</dbReference>
<dbReference type="Gene3D" id="3.30.30.30">
    <property type="match status" value="1"/>
</dbReference>
<dbReference type="Gene3D" id="3.30.420.40">
    <property type="match status" value="2"/>
</dbReference>
<dbReference type="Gene3D" id="3.90.640.10">
    <property type="entry name" value="Actin, Chain A, domain 4"/>
    <property type="match status" value="1"/>
</dbReference>
<dbReference type="Gene3D" id="2.60.34.10">
    <property type="entry name" value="Substrate Binding Domain Of DNAk, Chain A, domain 1"/>
    <property type="match status" value="1"/>
</dbReference>
<dbReference type="InterPro" id="IPR043129">
    <property type="entry name" value="ATPase_NBD"/>
</dbReference>
<dbReference type="InterPro" id="IPR018181">
    <property type="entry name" value="Heat_shock_70_CS"/>
</dbReference>
<dbReference type="InterPro" id="IPR029048">
    <property type="entry name" value="HSP70_C_sf"/>
</dbReference>
<dbReference type="InterPro" id="IPR029047">
    <property type="entry name" value="HSP70_peptide-bd_sf"/>
</dbReference>
<dbReference type="InterPro" id="IPR013126">
    <property type="entry name" value="Hsp_70_fam"/>
</dbReference>
<dbReference type="InterPro" id="IPR042053">
    <property type="entry name" value="HSPH1_NBD"/>
</dbReference>
<dbReference type="PANTHER" id="PTHR45639:SF2">
    <property type="entry name" value="HEAT SHOCK PROTEIN 105 KDA"/>
    <property type="match status" value="1"/>
</dbReference>
<dbReference type="PANTHER" id="PTHR45639">
    <property type="entry name" value="HSC70CB, ISOFORM G-RELATED"/>
    <property type="match status" value="1"/>
</dbReference>
<dbReference type="Pfam" id="PF00012">
    <property type="entry name" value="HSP70"/>
    <property type="match status" value="1"/>
</dbReference>
<dbReference type="PRINTS" id="PR00301">
    <property type="entry name" value="HEATSHOCK70"/>
</dbReference>
<dbReference type="SUPFAM" id="SSF53067">
    <property type="entry name" value="Actin-like ATPase domain"/>
    <property type="match status" value="2"/>
</dbReference>
<dbReference type="SUPFAM" id="SSF100934">
    <property type="entry name" value="Heat shock protein 70kD (HSP70), C-terminal subdomain"/>
    <property type="match status" value="2"/>
</dbReference>
<dbReference type="SUPFAM" id="SSF100920">
    <property type="entry name" value="Heat shock protein 70kD (HSP70), peptide-binding domain"/>
    <property type="match status" value="1"/>
</dbReference>
<dbReference type="PROSITE" id="PS01036">
    <property type="entry name" value="HSP70_3"/>
    <property type="match status" value="1"/>
</dbReference>
<proteinExistence type="evidence at transcript level"/>
<gene>
    <name type="primary">HSPH1</name>
    <name type="synonym">HSP105</name>
    <name type="synonym">HSP110</name>
</gene>
<comment type="function">
    <text evidence="1 2">Acts as a nucleotide-exchange factor (NEF) for chaperone proteins HSPA1A and HSPA1B, promoting the release of ADP from HSPA1A/B thereby triggering substrate release. Prevents the aggregation of denatured proteins in cells under severe stress, on which the ATP levels decrease markedly. Inhibits HSPA8/HSC70 ATPase and chaperone activities.</text>
</comment>
<comment type="subunit">
    <text evidence="1 2">Interacts with HSPA8/HSC70. Interacts with HSPA1A (via NBD) and HSPA1B (via NBD).</text>
</comment>
<comment type="subcellular location">
    <subcellularLocation>
        <location evidence="2">Cytoplasm</location>
    </subcellularLocation>
</comment>
<comment type="PTM">
    <text evidence="1">Phosphorylation on Ser-509 may be important for regulation of the HSPA8/HSC70 chaperone activity.</text>
</comment>
<comment type="similarity">
    <text evidence="4">Belongs to the heat shock protein 70 family.</text>
</comment>
<organism>
    <name type="scientific">Pongo abelii</name>
    <name type="common">Sumatran orangutan</name>
    <name type="synonym">Pongo pygmaeus abelii</name>
    <dbReference type="NCBI Taxonomy" id="9601"/>
    <lineage>
        <taxon>Eukaryota</taxon>
        <taxon>Metazoa</taxon>
        <taxon>Chordata</taxon>
        <taxon>Craniata</taxon>
        <taxon>Vertebrata</taxon>
        <taxon>Euteleostomi</taxon>
        <taxon>Mammalia</taxon>
        <taxon>Eutheria</taxon>
        <taxon>Euarchontoglires</taxon>
        <taxon>Primates</taxon>
        <taxon>Haplorrhini</taxon>
        <taxon>Catarrhini</taxon>
        <taxon>Hominidae</taxon>
        <taxon>Pongo</taxon>
    </lineage>
</organism>
<evidence type="ECO:0000250" key="1">
    <source>
        <dbReference type="UniProtKB" id="Q61699"/>
    </source>
</evidence>
<evidence type="ECO:0000250" key="2">
    <source>
        <dbReference type="UniProtKB" id="Q92598"/>
    </source>
</evidence>
<evidence type="ECO:0000256" key="3">
    <source>
        <dbReference type="SAM" id="MobiDB-lite"/>
    </source>
</evidence>
<evidence type="ECO:0000305" key="4"/>
<feature type="initiator methionine" description="Removed" evidence="2">
    <location>
        <position position="1"/>
    </location>
</feature>
<feature type="chain" id="PRO_0000235975" description="Heat shock protein 105 kDa">
    <location>
        <begin position="2"/>
        <end position="858"/>
    </location>
</feature>
<feature type="region of interest" description="Disordered" evidence="3">
    <location>
        <begin position="500"/>
        <end position="584"/>
    </location>
</feature>
<feature type="region of interest" description="Disordered" evidence="3">
    <location>
        <begin position="796"/>
        <end position="858"/>
    </location>
</feature>
<feature type="compositionally biased region" description="Acidic residues" evidence="3">
    <location>
        <begin position="504"/>
        <end position="514"/>
    </location>
</feature>
<feature type="compositionally biased region" description="Polar residues" evidence="3">
    <location>
        <begin position="532"/>
        <end position="554"/>
    </location>
</feature>
<feature type="compositionally biased region" description="Basic and acidic residues" evidence="3">
    <location>
        <begin position="563"/>
        <end position="584"/>
    </location>
</feature>
<feature type="compositionally biased region" description="Basic and acidic residues" evidence="3">
    <location>
        <begin position="805"/>
        <end position="814"/>
    </location>
</feature>
<feature type="compositionally biased region" description="Basic and acidic residues" evidence="3">
    <location>
        <begin position="821"/>
        <end position="832"/>
    </location>
</feature>
<feature type="compositionally biased region" description="Polar residues" evidence="3">
    <location>
        <begin position="849"/>
        <end position="858"/>
    </location>
</feature>
<feature type="modified residue" description="N-acetylserine" evidence="2">
    <location>
        <position position="2"/>
    </location>
</feature>
<feature type="modified residue" description="N6-acetyllysine" evidence="1">
    <location>
        <position position="471"/>
    </location>
</feature>
<feature type="modified residue" description="Phosphoserine" evidence="1">
    <location>
        <position position="509"/>
    </location>
</feature>
<feature type="modified residue" description="Phosphoserine" evidence="1">
    <location>
        <position position="510"/>
    </location>
</feature>
<feature type="modified residue" description="Phosphoserine" evidence="2">
    <location>
        <position position="557"/>
    </location>
</feature>
<feature type="modified residue" description="Phosphothreonine" evidence="2">
    <location>
        <position position="561"/>
    </location>
</feature>
<feature type="modified residue" description="Phosphoserine" evidence="2">
    <location>
        <position position="809"/>
    </location>
</feature>
<feature type="modified residue" description="Phosphothreonine" evidence="2">
    <location>
        <position position="815"/>
    </location>
</feature>
<sequence length="858" mass="96866">MSVVGLDVGSQSCYIAVARAGGIETIANEFSDRCTPSVISFGSKNRTIGVAAKNQQITHANNTVSNFKRFHGRAFNDPFIQKEKENLSYDLVPLKNGGVGIKVMYMGEEHLFSVEQITAMLLTKLKETAENSLKKPVTDCVISVPSFFTDAERRSVLDAAQIVGLNCLRLMNDMTAVALNYGIYKQDLPSLDEKPRIVVFVDMGHSAFQVSACAFNKGKLKVLGTAFDPFLGGKNFDEKLVEHFCAEFKTKYKLDAKSKIRALLRLYQECEKLKKLMSSNSTDLPLNIECFMNDKDVSGKMNRSQFEELCAELLQKIEVPLYSLLEQTHLKVEDVSAVEIVGGATRIPAVKERIAKFFGKDISTTLNADEAVARGCALQCAILSPAFKVREFSVTDAVPFPISLIWNHDSEDTEGVHEVFSRNHAAPFSKVLTFLRRGPFELEAFYSDPQGVPYPEAKIGRFVVQNVSAQKDGEKSRVKVKVRVNTHGIFTISTASMVEKVPTEENEMSSEADMECLNQRPPENPDTDKNVQQDNSEAGTQPQVQTDAQQTSQSPPSPELTSEENKIPDADKANEKKVDQPPEAKKPKIKVVNVELPIEANLVWQLGKDLLNMYIETEGKMIMQDKLEKERNDAKNAVEEYVYEFRDKLCGPYEKFICEQDHQNFLRLLTETEDWLYEEGEDQAKQAYVDKLEELMKIGTPVKVRFQEAEERPKMFEELGQRLQHYAKIAADFRNKDEKYNHIDESEMKKVEKSVNEVMEWMNNVMNAQAKESLDQDPVVRAQEIKTKIKELNNTCEPVVTQPKPKIESPKLERTPNGPNIDKKEEDLEDKNNFGAEPPHQNGECYPNEKNSVNMDLD</sequence>
<keyword id="KW-0007">Acetylation</keyword>
<keyword id="KW-0067">ATP-binding</keyword>
<keyword id="KW-0963">Cytoplasm</keyword>
<keyword id="KW-0547">Nucleotide-binding</keyword>
<keyword id="KW-0597">Phosphoprotein</keyword>
<keyword id="KW-1185">Reference proteome</keyword>
<keyword id="KW-0346">Stress response</keyword>
<reference key="1">
    <citation type="submission" date="2004-11" db="EMBL/GenBank/DDBJ databases">
        <authorList>
            <consortium name="The German cDNA consortium"/>
        </authorList>
    </citation>
    <scope>NUCLEOTIDE SEQUENCE [LARGE SCALE MRNA]</scope>
    <source>
        <tissue>Brain cortex</tissue>
    </source>
</reference>
<name>HS105_PONAB</name>
<protein>
    <recommendedName>
        <fullName>Heat shock protein 105 kDa</fullName>
    </recommendedName>
    <alternativeName>
        <fullName>Heat shock 110 kDa protein</fullName>
    </alternativeName>
</protein>